<evidence type="ECO:0000255" key="1">
    <source>
        <dbReference type="HAMAP-Rule" id="MF_00244"/>
    </source>
</evidence>
<name>NADD_LISMO</name>
<protein>
    <recommendedName>
        <fullName evidence="1">Probable nicotinate-nucleotide adenylyltransferase</fullName>
        <ecNumber evidence="1">2.7.7.18</ecNumber>
    </recommendedName>
    <alternativeName>
        <fullName evidence="1">Deamido-NAD(+) diphosphorylase</fullName>
    </alternativeName>
    <alternativeName>
        <fullName evidence="1">Deamido-NAD(+) pyrophosphorylase</fullName>
    </alternativeName>
    <alternativeName>
        <fullName evidence="1">Nicotinate mononucleotide adenylyltransferase</fullName>
        <shortName evidence="1">NaMN adenylyltransferase</shortName>
    </alternativeName>
</protein>
<dbReference type="EC" id="2.7.7.18" evidence="1"/>
<dbReference type="EMBL" id="AL591979">
    <property type="protein sequence ID" value="CAC99566.1"/>
    <property type="molecule type" value="Genomic_DNA"/>
</dbReference>
<dbReference type="PIR" id="AH1260">
    <property type="entry name" value="AH1260"/>
</dbReference>
<dbReference type="RefSeq" id="NP_465013.1">
    <property type="nucleotide sequence ID" value="NC_003210.1"/>
</dbReference>
<dbReference type="RefSeq" id="WP_010990139.1">
    <property type="nucleotide sequence ID" value="NZ_CP149495.1"/>
</dbReference>
<dbReference type="SMR" id="Q8Y735"/>
<dbReference type="STRING" id="169963.gene:17594145"/>
<dbReference type="PaxDb" id="169963-lmo1488"/>
<dbReference type="EnsemblBacteria" id="CAC99566">
    <property type="protein sequence ID" value="CAC99566"/>
    <property type="gene ID" value="CAC99566"/>
</dbReference>
<dbReference type="GeneID" id="986963"/>
<dbReference type="KEGG" id="lmo:lmo1488"/>
<dbReference type="PATRIC" id="fig|169963.11.peg.1528"/>
<dbReference type="eggNOG" id="COG1057">
    <property type="taxonomic scope" value="Bacteria"/>
</dbReference>
<dbReference type="HOGENOM" id="CLU_069765_3_1_9"/>
<dbReference type="OrthoDB" id="5295945at2"/>
<dbReference type="PhylomeDB" id="Q8Y735"/>
<dbReference type="BioCyc" id="LMON169963:LMO1488-MONOMER"/>
<dbReference type="UniPathway" id="UPA00253">
    <property type="reaction ID" value="UER00332"/>
</dbReference>
<dbReference type="Proteomes" id="UP000000817">
    <property type="component" value="Chromosome"/>
</dbReference>
<dbReference type="GO" id="GO:0005524">
    <property type="term" value="F:ATP binding"/>
    <property type="evidence" value="ECO:0007669"/>
    <property type="project" value="UniProtKB-KW"/>
</dbReference>
<dbReference type="GO" id="GO:0004515">
    <property type="term" value="F:nicotinate-nucleotide adenylyltransferase activity"/>
    <property type="evidence" value="ECO:0007669"/>
    <property type="project" value="UniProtKB-UniRule"/>
</dbReference>
<dbReference type="GO" id="GO:0009435">
    <property type="term" value="P:NAD biosynthetic process"/>
    <property type="evidence" value="ECO:0007669"/>
    <property type="project" value="UniProtKB-UniRule"/>
</dbReference>
<dbReference type="CDD" id="cd02165">
    <property type="entry name" value="NMNAT"/>
    <property type="match status" value="1"/>
</dbReference>
<dbReference type="FunFam" id="3.40.50.620:FF:000079">
    <property type="entry name" value="Probable nicotinate-nucleotide adenylyltransferase"/>
    <property type="match status" value="1"/>
</dbReference>
<dbReference type="Gene3D" id="3.40.50.620">
    <property type="entry name" value="HUPs"/>
    <property type="match status" value="1"/>
</dbReference>
<dbReference type="HAMAP" id="MF_00244">
    <property type="entry name" value="NaMN_adenylyltr"/>
    <property type="match status" value="1"/>
</dbReference>
<dbReference type="InterPro" id="IPR004821">
    <property type="entry name" value="Cyt_trans-like"/>
</dbReference>
<dbReference type="InterPro" id="IPR005248">
    <property type="entry name" value="NadD/NMNAT"/>
</dbReference>
<dbReference type="InterPro" id="IPR014729">
    <property type="entry name" value="Rossmann-like_a/b/a_fold"/>
</dbReference>
<dbReference type="NCBIfam" id="TIGR00125">
    <property type="entry name" value="cyt_tran_rel"/>
    <property type="match status" value="1"/>
</dbReference>
<dbReference type="NCBIfam" id="TIGR00482">
    <property type="entry name" value="nicotinate (nicotinamide) nucleotide adenylyltransferase"/>
    <property type="match status" value="1"/>
</dbReference>
<dbReference type="NCBIfam" id="NF000840">
    <property type="entry name" value="PRK00071.1-3"/>
    <property type="match status" value="1"/>
</dbReference>
<dbReference type="NCBIfam" id="NF000841">
    <property type="entry name" value="PRK00071.1-4"/>
    <property type="match status" value="1"/>
</dbReference>
<dbReference type="PANTHER" id="PTHR39321">
    <property type="entry name" value="NICOTINATE-NUCLEOTIDE ADENYLYLTRANSFERASE-RELATED"/>
    <property type="match status" value="1"/>
</dbReference>
<dbReference type="PANTHER" id="PTHR39321:SF3">
    <property type="entry name" value="PHOSPHOPANTETHEINE ADENYLYLTRANSFERASE"/>
    <property type="match status" value="1"/>
</dbReference>
<dbReference type="Pfam" id="PF01467">
    <property type="entry name" value="CTP_transf_like"/>
    <property type="match status" value="1"/>
</dbReference>
<dbReference type="SUPFAM" id="SSF52374">
    <property type="entry name" value="Nucleotidylyl transferase"/>
    <property type="match status" value="1"/>
</dbReference>
<accession>Q8Y735</accession>
<proteinExistence type="inferred from homology"/>
<feature type="chain" id="PRO_0000181424" description="Probable nicotinate-nucleotide adenylyltransferase">
    <location>
        <begin position="1"/>
        <end position="188"/>
    </location>
</feature>
<sequence length="188" mass="21950">MKHKVGILGGTFDPPHLAHLHMAEEAKKQLELEKILFLPNKIPPHKHISGMASINERVEMLQLMIEGIDSFEIDTRELMRTGKSYTYDTMRDMIIEQPDTDFYFIIGGDMVEYLPKWYHIDDLVKMVTFVGVNRPLYQPEVPYDVVKIDMPKTTISSTEIRNDIEHAEAFLPEKVWSYIKEHQLYGKK</sequence>
<reference key="1">
    <citation type="journal article" date="2001" name="Science">
        <title>Comparative genomics of Listeria species.</title>
        <authorList>
            <person name="Glaser P."/>
            <person name="Frangeul L."/>
            <person name="Buchrieser C."/>
            <person name="Rusniok C."/>
            <person name="Amend A."/>
            <person name="Baquero F."/>
            <person name="Berche P."/>
            <person name="Bloecker H."/>
            <person name="Brandt P."/>
            <person name="Chakraborty T."/>
            <person name="Charbit A."/>
            <person name="Chetouani F."/>
            <person name="Couve E."/>
            <person name="de Daruvar A."/>
            <person name="Dehoux P."/>
            <person name="Domann E."/>
            <person name="Dominguez-Bernal G."/>
            <person name="Duchaud E."/>
            <person name="Durant L."/>
            <person name="Dussurget O."/>
            <person name="Entian K.-D."/>
            <person name="Fsihi H."/>
            <person name="Garcia-del Portillo F."/>
            <person name="Garrido P."/>
            <person name="Gautier L."/>
            <person name="Goebel W."/>
            <person name="Gomez-Lopez N."/>
            <person name="Hain T."/>
            <person name="Hauf J."/>
            <person name="Jackson D."/>
            <person name="Jones L.-M."/>
            <person name="Kaerst U."/>
            <person name="Kreft J."/>
            <person name="Kuhn M."/>
            <person name="Kunst F."/>
            <person name="Kurapkat G."/>
            <person name="Madueno E."/>
            <person name="Maitournam A."/>
            <person name="Mata Vicente J."/>
            <person name="Ng E."/>
            <person name="Nedjari H."/>
            <person name="Nordsiek G."/>
            <person name="Novella S."/>
            <person name="de Pablos B."/>
            <person name="Perez-Diaz J.-C."/>
            <person name="Purcell R."/>
            <person name="Remmel B."/>
            <person name="Rose M."/>
            <person name="Schlueter T."/>
            <person name="Simoes N."/>
            <person name="Tierrez A."/>
            <person name="Vazquez-Boland J.-A."/>
            <person name="Voss H."/>
            <person name="Wehland J."/>
            <person name="Cossart P."/>
        </authorList>
    </citation>
    <scope>NUCLEOTIDE SEQUENCE [LARGE SCALE GENOMIC DNA]</scope>
    <source>
        <strain>ATCC BAA-679 / EGD-e</strain>
    </source>
</reference>
<keyword id="KW-0067">ATP-binding</keyword>
<keyword id="KW-0520">NAD</keyword>
<keyword id="KW-0547">Nucleotide-binding</keyword>
<keyword id="KW-0548">Nucleotidyltransferase</keyword>
<keyword id="KW-0662">Pyridine nucleotide biosynthesis</keyword>
<keyword id="KW-1185">Reference proteome</keyword>
<keyword id="KW-0808">Transferase</keyword>
<gene>
    <name evidence="1" type="primary">nadD</name>
    <name type="ordered locus">lmo1488</name>
</gene>
<comment type="function">
    <text evidence="1">Catalyzes the reversible adenylation of nicotinate mononucleotide (NaMN) to nicotinic acid adenine dinucleotide (NaAD).</text>
</comment>
<comment type="catalytic activity">
    <reaction evidence="1">
        <text>nicotinate beta-D-ribonucleotide + ATP + H(+) = deamido-NAD(+) + diphosphate</text>
        <dbReference type="Rhea" id="RHEA:22860"/>
        <dbReference type="ChEBI" id="CHEBI:15378"/>
        <dbReference type="ChEBI" id="CHEBI:30616"/>
        <dbReference type="ChEBI" id="CHEBI:33019"/>
        <dbReference type="ChEBI" id="CHEBI:57502"/>
        <dbReference type="ChEBI" id="CHEBI:58437"/>
        <dbReference type="EC" id="2.7.7.18"/>
    </reaction>
</comment>
<comment type="pathway">
    <text evidence="1">Cofactor biosynthesis; NAD(+) biosynthesis; deamido-NAD(+) from nicotinate D-ribonucleotide: step 1/1.</text>
</comment>
<comment type="similarity">
    <text evidence="1">Belongs to the NadD family.</text>
</comment>
<organism>
    <name type="scientific">Listeria monocytogenes serovar 1/2a (strain ATCC BAA-679 / EGD-e)</name>
    <dbReference type="NCBI Taxonomy" id="169963"/>
    <lineage>
        <taxon>Bacteria</taxon>
        <taxon>Bacillati</taxon>
        <taxon>Bacillota</taxon>
        <taxon>Bacilli</taxon>
        <taxon>Bacillales</taxon>
        <taxon>Listeriaceae</taxon>
        <taxon>Listeria</taxon>
    </lineage>
</organism>